<protein>
    <recommendedName>
        <fullName evidence="8">Short-chain dehydrogenase/reductase prx7</fullName>
        <ecNumber evidence="10">1.1.99.-</ecNumber>
    </recommendedName>
    <alternativeName>
        <fullName evidence="8">PR-toxin biosynthesis cluster protein 7</fullName>
    </alternativeName>
</protein>
<sequence>MGLAVAKALSLQKDWEIYILDINSERGAETAKELPRTTFHYANVTKYSDLAAAFQSMFQQHGKLDFVFANAGVIERTNFYSTPQAENDMDVCPPPEPDLPSIDADLKGVVFTAYLAQHYFRHSPHRGHGGSLVMTASCGGLYPSFYSPLYSAAKFGVVGFMRSISQHFHASGIRVNAICPGIVRTNLVDSAGWDSFPPGRFIEVETIARLVLQLVDGGEPAGRGLTDTTGRHLPLEELYGVAVEISDSGFYFRDQHTFCDEGMREVMDATVVENQVGAVLNG</sequence>
<organism>
    <name type="scientific">Penicillium rubens (strain ATCC 28089 / DSM 1075 / NRRL 1951 / Wisconsin 54-1255)</name>
    <name type="common">Penicillium chrysogenum</name>
    <dbReference type="NCBI Taxonomy" id="500485"/>
    <lineage>
        <taxon>Eukaryota</taxon>
        <taxon>Fungi</taxon>
        <taxon>Dikarya</taxon>
        <taxon>Ascomycota</taxon>
        <taxon>Pezizomycotina</taxon>
        <taxon>Eurotiomycetes</taxon>
        <taxon>Eurotiomycetidae</taxon>
        <taxon>Eurotiales</taxon>
        <taxon>Aspergillaceae</taxon>
        <taxon>Penicillium</taxon>
        <taxon>Penicillium chrysogenum species complex</taxon>
    </lineage>
</organism>
<gene>
    <name evidence="8" type="primary">prx7</name>
    <name type="ORF">Pc12g06280</name>
    <name type="ORF">PCH_Pc12g06280</name>
</gene>
<keyword id="KW-0521">NADP</keyword>
<keyword id="KW-0560">Oxidoreductase</keyword>
<keyword id="KW-1185">Reference proteome</keyword>
<name>PRX7_PENRW</name>
<evidence type="ECO:0000250" key="1">
    <source>
        <dbReference type="UniProtKB" id="L0E2Z4"/>
    </source>
</evidence>
<evidence type="ECO:0000250" key="2">
    <source>
        <dbReference type="UniProtKB" id="O93868"/>
    </source>
</evidence>
<evidence type="ECO:0000250" key="3">
    <source>
        <dbReference type="UniProtKB" id="W6Q3Z9"/>
    </source>
</evidence>
<evidence type="ECO:0000250" key="4">
    <source>
        <dbReference type="UniProtKB" id="W6QB15"/>
    </source>
</evidence>
<evidence type="ECO:0000250" key="5">
    <source>
        <dbReference type="UniProtKB" id="W6QP10"/>
    </source>
</evidence>
<evidence type="ECO:0000255" key="6">
    <source>
        <dbReference type="PROSITE-ProRule" id="PRU10001"/>
    </source>
</evidence>
<evidence type="ECO:0000269" key="7">
    <source>
    </source>
</evidence>
<evidence type="ECO:0000303" key="8">
    <source>
    </source>
</evidence>
<evidence type="ECO:0000305" key="9"/>
<evidence type="ECO:0000305" key="10">
    <source>
    </source>
</evidence>
<feature type="chain" id="PRO_0000451219" description="Short-chain dehydrogenase/reductase prx7">
    <location>
        <begin position="1"/>
        <end position="282"/>
    </location>
</feature>
<feature type="active site" description="Proton acceptor" evidence="6">
    <location>
        <position position="150"/>
    </location>
</feature>
<feature type="active site" description="Lowers pKa of active site Tyr" evidence="2">
    <location>
        <position position="154"/>
    </location>
</feature>
<feature type="binding site" evidence="1">
    <location>
        <position position="23"/>
    </location>
    <ligand>
        <name>NADP(+)</name>
        <dbReference type="ChEBI" id="CHEBI:58349"/>
    </ligand>
</feature>
<feature type="binding site" evidence="2">
    <location>
        <position position="70"/>
    </location>
    <ligand>
        <name>NADP(+)</name>
        <dbReference type="ChEBI" id="CHEBI:58349"/>
    </ligand>
</feature>
<feature type="binding site" evidence="2">
    <location>
        <position position="150"/>
    </location>
    <ligand>
        <name>NADP(+)</name>
        <dbReference type="ChEBI" id="CHEBI:58349"/>
    </ligand>
</feature>
<feature type="binding site" evidence="2">
    <location>
        <position position="154"/>
    </location>
    <ligand>
        <name>NADP(+)</name>
        <dbReference type="ChEBI" id="CHEBI:58349"/>
    </ligand>
</feature>
<feature type="binding site" evidence="2">
    <location>
        <position position="183"/>
    </location>
    <ligand>
        <name>NADP(+)</name>
        <dbReference type="ChEBI" id="CHEBI:58349"/>
    </ligand>
</feature>
<feature type="binding site" evidence="1">
    <location>
        <position position="185"/>
    </location>
    <ligand>
        <name>NADP(+)</name>
        <dbReference type="ChEBI" id="CHEBI:58349"/>
    </ligand>
</feature>
<proteinExistence type="evidence at transcript level"/>
<comment type="function">
    <text evidence="3 4 5 7">Short-chain dehydrogenase/reductase; part of the gene cluster that mediates the biosynthesis of PR-toxin, a bicyclic sesquiterpene belonging to the eremophilane class and acting as a mycotoxin (PubMed:24239699). The first step of the pathway is catalyzed by the aristolochene synthase which performs the cyclization of trans,trans-farnesyl diphosphate (FPP) to the bicyclic sesquiterpene aristolochene (PubMed:24239699). Following the formation of aristolochene, the non-oxygenated aristolochene is converted to the trioxygenated intermediate eremofortin B, via 7-epi-neopetasone (PubMed:24239699). This conversion appears to involve three enzymes, a hydroxysterol oxidase-like enzyme, the quinone-oxidase prx3 that forms the quinone-type-structure in the bicyclic nucleus of aristolochene with the C8-oxo group and the C-3 hydroxyl group, and the P450 monooxygenase prx9 that introduces the epoxide at the double bond between carbons 1 and 2 (By similarity) (PubMed:24239699). No monoxy or dioxy-intermediates have been reported to be released to the broth, so these three early oxidative reactions may be coupled together (PubMed:24239699). Eremofortin B is further oxidized by another P450 monooxygenase, that introduces a second epoxide between carbons 7 and 11 prior to acetylation to eremofortin A by the acetyltransferase prx11 (By similarity). The second epoxidation may be performed by a second P450 monooxygenase (PubMed:24239699). After the acetylation step, eremofortin A is converted to eremofortin C and then to PR-toxin (PubMed:24239699). First the conversion of eremofortin A to eremofortin C proceeds by oxidation of the side chain of the molecule at C-12 and is catalyzed by the short-chain oxidoreductase prx1 (PubMed:24239699). The cytochrome P450 monooxygenase prx8 also plays a role in this step (By similarity). The primary alcohol formed at C-12 is finally oxidized by the short-chain alcohol dehydrogenase prx4 that forms PR-toxin (PubMed:24239699).</text>
</comment>
<comment type="pathway">
    <text evidence="10">Sesquiterpene biosynthesis.</text>
</comment>
<comment type="induction">
    <text evidence="7">Expression and the subsequent production of PR-toxin take place under static culture conditions (oxygen limited), whereas no expression of the PR-toxin genes occurs under the strongly aerated conditions required for optimal penicillin production (PubMed:24239699). There is a negative control of the transcription of the PR-toxin genes by the penicillin biosynthesis gene product(s), or by a regulatory peptide encoded by a small ORF inside the penicillin gene cluster (PubMed:24239699).</text>
</comment>
<comment type="similarity">
    <text evidence="9">Belongs to the short-chain dehydrogenases/reductases (SDR) family.</text>
</comment>
<reference key="1">
    <citation type="journal article" date="2008" name="Nat. Biotechnol.">
        <title>Genome sequencing and analysis of the filamentous fungus Penicillium chrysogenum.</title>
        <authorList>
            <person name="van den Berg M.A."/>
            <person name="Albang R."/>
            <person name="Albermann K."/>
            <person name="Badger J.H."/>
            <person name="Daran J.-M."/>
            <person name="Driessen A.J.M."/>
            <person name="Garcia-Estrada C."/>
            <person name="Fedorova N.D."/>
            <person name="Harris D.M."/>
            <person name="Heijne W.H.M."/>
            <person name="Joardar V.S."/>
            <person name="Kiel J.A.K.W."/>
            <person name="Kovalchuk A."/>
            <person name="Martin J.F."/>
            <person name="Nierman W.C."/>
            <person name="Nijland J.G."/>
            <person name="Pronk J.T."/>
            <person name="Roubos J.A."/>
            <person name="van der Klei I.J."/>
            <person name="van Peij N.N.M.E."/>
            <person name="Veenhuis M."/>
            <person name="von Doehren H."/>
            <person name="Wagner C."/>
            <person name="Wortman J.R."/>
            <person name="Bovenberg R.A.L."/>
        </authorList>
    </citation>
    <scope>NUCLEOTIDE SEQUENCE [LARGE SCALE GENOMIC DNA]</scope>
    <source>
        <strain>ATCC 28089 / DSM 1075 / NRRL 1951 / Wisconsin 54-1255</strain>
    </source>
</reference>
<reference key="2">
    <citation type="journal article" date="2014" name="Fungal Genet. Biol.">
        <title>Molecular characterization of the PR-toxin gene cluster in Penicillium roqueforti and Penicillium chrysogenum: cross talk of secondary metabolite pathways.</title>
        <authorList>
            <person name="Hidalgo P.I."/>
            <person name="Ullan R.V."/>
            <person name="Albillos S.M."/>
            <person name="Montero O."/>
            <person name="Fernandez-Bodega M.A."/>
            <person name="Garcia-Estrada C."/>
            <person name="Fernandez-Aguado M."/>
            <person name="Martin J.F."/>
        </authorList>
    </citation>
    <scope>FUNCTION</scope>
    <scope>INDUCTION</scope>
    <scope>PATHWAY</scope>
</reference>
<accession>B6H061</accession>
<dbReference type="EC" id="1.1.99.-" evidence="10"/>
<dbReference type="EMBL" id="AM920427">
    <property type="protein sequence ID" value="CAP80255.1"/>
    <property type="molecule type" value="Genomic_DNA"/>
</dbReference>
<dbReference type="RefSeq" id="XP_002557471.1">
    <property type="nucleotide sequence ID" value="XM_002557425.1"/>
</dbReference>
<dbReference type="SMR" id="B6H061"/>
<dbReference type="VEuPathDB" id="FungiDB:PCH_Pc12g06280"/>
<dbReference type="eggNOG" id="KOG4169">
    <property type="taxonomic scope" value="Eukaryota"/>
</dbReference>
<dbReference type="HOGENOM" id="CLU_010194_13_0_1"/>
<dbReference type="OMA" id="FYFRDQH"/>
<dbReference type="OrthoDB" id="37659at2759"/>
<dbReference type="BioCyc" id="PCHR:PC12G06280-MONOMER"/>
<dbReference type="Proteomes" id="UP000000724">
    <property type="component" value="Contig Pc00c12"/>
</dbReference>
<dbReference type="GO" id="GO:0005737">
    <property type="term" value="C:cytoplasm"/>
    <property type="evidence" value="ECO:0007669"/>
    <property type="project" value="TreeGrafter"/>
</dbReference>
<dbReference type="GO" id="GO:0016616">
    <property type="term" value="F:oxidoreductase activity, acting on the CH-OH group of donors, NAD or NADP as acceptor"/>
    <property type="evidence" value="ECO:0007669"/>
    <property type="project" value="TreeGrafter"/>
</dbReference>
<dbReference type="GO" id="GO:0044550">
    <property type="term" value="P:secondary metabolite biosynthetic process"/>
    <property type="evidence" value="ECO:0007669"/>
    <property type="project" value="UniProtKB-ARBA"/>
</dbReference>
<dbReference type="Gene3D" id="3.40.50.720">
    <property type="entry name" value="NAD(P)-binding Rossmann-like Domain"/>
    <property type="match status" value="1"/>
</dbReference>
<dbReference type="InterPro" id="IPR036291">
    <property type="entry name" value="NAD(P)-bd_dom_sf"/>
</dbReference>
<dbReference type="InterPro" id="IPR020904">
    <property type="entry name" value="Sc_DH/Rdtase_CS"/>
</dbReference>
<dbReference type="InterPro" id="IPR002347">
    <property type="entry name" value="SDR_fam"/>
</dbReference>
<dbReference type="PANTHER" id="PTHR44229">
    <property type="entry name" value="15-HYDROXYPROSTAGLANDIN DEHYDROGENASE [NAD(+)]"/>
    <property type="match status" value="1"/>
</dbReference>
<dbReference type="PANTHER" id="PTHR44229:SF4">
    <property type="entry name" value="15-HYDROXYPROSTAGLANDIN DEHYDROGENASE [NAD(+)]"/>
    <property type="match status" value="1"/>
</dbReference>
<dbReference type="Pfam" id="PF00106">
    <property type="entry name" value="adh_short"/>
    <property type="match status" value="1"/>
</dbReference>
<dbReference type="PRINTS" id="PR00081">
    <property type="entry name" value="GDHRDH"/>
</dbReference>
<dbReference type="PRINTS" id="PR00080">
    <property type="entry name" value="SDRFAMILY"/>
</dbReference>
<dbReference type="SUPFAM" id="SSF51735">
    <property type="entry name" value="NAD(P)-binding Rossmann-fold domains"/>
    <property type="match status" value="1"/>
</dbReference>
<dbReference type="PROSITE" id="PS00061">
    <property type="entry name" value="ADH_SHORT"/>
    <property type="match status" value="1"/>
</dbReference>